<keyword id="KW-0489">Methyltransferase</keyword>
<keyword id="KW-1185">Reference proteome</keyword>
<keyword id="KW-0949">S-adenosyl-L-methionine</keyword>
<keyword id="KW-0808">Transferase</keyword>
<reference key="1">
    <citation type="journal article" date="2004" name="Genome Res.">
        <title>The genome sequence of Mycoplasma mycoides subsp. mycoides SC type strain PG1T, the causative agent of contagious bovine pleuropneumonia (CBPP).</title>
        <authorList>
            <person name="Westberg J."/>
            <person name="Persson A."/>
            <person name="Holmberg A."/>
            <person name="Goesmann A."/>
            <person name="Lundeberg J."/>
            <person name="Johansson K.-E."/>
            <person name="Pettersson B."/>
            <person name="Uhlen M."/>
        </authorList>
    </citation>
    <scope>NUCLEOTIDE SEQUENCE [LARGE SCALE GENOMIC DNA]</scope>
    <source>
        <strain>CCUG 32753 / NCTC 10114 / PG1</strain>
    </source>
</reference>
<dbReference type="EC" id="2.1.1.297" evidence="1"/>
<dbReference type="EMBL" id="BX293980">
    <property type="protein sequence ID" value="CAE76796.1"/>
    <property type="molecule type" value="Genomic_DNA"/>
</dbReference>
<dbReference type="RefSeq" id="NP_975154.1">
    <property type="nucleotide sequence ID" value="NC_005364.2"/>
</dbReference>
<dbReference type="RefSeq" id="WP_011166353.1">
    <property type="nucleotide sequence ID" value="NC_005364.2"/>
</dbReference>
<dbReference type="SMR" id="Q6MU88"/>
<dbReference type="STRING" id="272632.MSC_0151"/>
<dbReference type="KEGG" id="mmy:MSC_0151"/>
<dbReference type="PATRIC" id="fig|272632.4.peg.160"/>
<dbReference type="eggNOG" id="COG2890">
    <property type="taxonomic scope" value="Bacteria"/>
</dbReference>
<dbReference type="HOGENOM" id="CLU_018398_3_2_14"/>
<dbReference type="Proteomes" id="UP000001016">
    <property type="component" value="Chromosome"/>
</dbReference>
<dbReference type="GO" id="GO:0003676">
    <property type="term" value="F:nucleic acid binding"/>
    <property type="evidence" value="ECO:0007669"/>
    <property type="project" value="InterPro"/>
</dbReference>
<dbReference type="GO" id="GO:0102559">
    <property type="term" value="F:protein-(glutamine-N5) methyltransferase activity"/>
    <property type="evidence" value="ECO:0007669"/>
    <property type="project" value="UniProtKB-EC"/>
</dbReference>
<dbReference type="GO" id="GO:0036009">
    <property type="term" value="F:protein-glutamine N-methyltransferase activity"/>
    <property type="evidence" value="ECO:0007669"/>
    <property type="project" value="UniProtKB-UniRule"/>
</dbReference>
<dbReference type="GO" id="GO:0032259">
    <property type="term" value="P:methylation"/>
    <property type="evidence" value="ECO:0007669"/>
    <property type="project" value="UniProtKB-KW"/>
</dbReference>
<dbReference type="CDD" id="cd02440">
    <property type="entry name" value="AdoMet_MTases"/>
    <property type="match status" value="1"/>
</dbReference>
<dbReference type="Gene3D" id="1.10.8.10">
    <property type="entry name" value="DNA helicase RuvA subunit, C-terminal domain"/>
    <property type="match status" value="1"/>
</dbReference>
<dbReference type="Gene3D" id="3.40.50.150">
    <property type="entry name" value="Vaccinia Virus protein VP39"/>
    <property type="match status" value="1"/>
</dbReference>
<dbReference type="HAMAP" id="MF_02126">
    <property type="entry name" value="RF_methyltr_PrmC"/>
    <property type="match status" value="1"/>
</dbReference>
<dbReference type="InterPro" id="IPR002052">
    <property type="entry name" value="DNA_methylase_N6_adenine_CS"/>
</dbReference>
<dbReference type="InterPro" id="IPR004556">
    <property type="entry name" value="HemK-like"/>
</dbReference>
<dbReference type="InterPro" id="IPR050320">
    <property type="entry name" value="N5-glutamine_MTase"/>
</dbReference>
<dbReference type="InterPro" id="IPR040758">
    <property type="entry name" value="PrmC_N"/>
</dbReference>
<dbReference type="InterPro" id="IPR019874">
    <property type="entry name" value="RF_methyltr_PrmC"/>
</dbReference>
<dbReference type="InterPro" id="IPR029063">
    <property type="entry name" value="SAM-dependent_MTases_sf"/>
</dbReference>
<dbReference type="InterPro" id="IPR007848">
    <property type="entry name" value="Small_mtfrase_dom"/>
</dbReference>
<dbReference type="NCBIfam" id="TIGR00536">
    <property type="entry name" value="hemK_fam"/>
    <property type="match status" value="1"/>
</dbReference>
<dbReference type="NCBIfam" id="TIGR03534">
    <property type="entry name" value="RF_mod_PrmC"/>
    <property type="match status" value="1"/>
</dbReference>
<dbReference type="PANTHER" id="PTHR18895">
    <property type="entry name" value="HEMK METHYLTRANSFERASE"/>
    <property type="match status" value="1"/>
</dbReference>
<dbReference type="PANTHER" id="PTHR18895:SF74">
    <property type="entry name" value="MTRF1L RELEASE FACTOR GLUTAMINE METHYLTRANSFERASE"/>
    <property type="match status" value="1"/>
</dbReference>
<dbReference type="Pfam" id="PF05175">
    <property type="entry name" value="MTS"/>
    <property type="match status" value="1"/>
</dbReference>
<dbReference type="Pfam" id="PF17827">
    <property type="entry name" value="PrmC_N"/>
    <property type="match status" value="1"/>
</dbReference>
<dbReference type="SUPFAM" id="SSF53335">
    <property type="entry name" value="S-adenosyl-L-methionine-dependent methyltransferases"/>
    <property type="match status" value="1"/>
</dbReference>
<feature type="chain" id="PRO_0000414533" description="Release factor glutamine methyltransferase">
    <location>
        <begin position="1"/>
        <end position="282"/>
    </location>
</feature>
<feature type="binding site" evidence="1">
    <location>
        <position position="141"/>
    </location>
    <ligand>
        <name>S-adenosyl-L-methionine</name>
        <dbReference type="ChEBI" id="CHEBI:59789"/>
    </ligand>
</feature>
<feature type="binding site" evidence="1">
    <location>
        <position position="169"/>
    </location>
    <ligand>
        <name>S-adenosyl-L-methionine</name>
        <dbReference type="ChEBI" id="CHEBI:59789"/>
    </ligand>
</feature>
<feature type="binding site" evidence="1">
    <location>
        <begin position="186"/>
        <end position="189"/>
    </location>
    <ligand>
        <name>substrate</name>
    </ligand>
</feature>
<feature type="binding site" evidence="1">
    <location>
        <position position="186"/>
    </location>
    <ligand>
        <name>S-adenosyl-L-methionine</name>
        <dbReference type="ChEBI" id="CHEBI:59789"/>
    </ligand>
</feature>
<name>PRMC_MYCMS</name>
<organism>
    <name type="scientific">Mycoplasma mycoides subsp. mycoides SC (strain CCUG 32753 / NCTC 10114 / PG1)</name>
    <dbReference type="NCBI Taxonomy" id="272632"/>
    <lineage>
        <taxon>Bacteria</taxon>
        <taxon>Bacillati</taxon>
        <taxon>Mycoplasmatota</taxon>
        <taxon>Mollicutes</taxon>
        <taxon>Mycoplasmataceae</taxon>
        <taxon>Mycoplasma</taxon>
    </lineage>
</organism>
<sequence length="282" mass="33026">MNNTIFNVLNKIKNTNISLNKADVYHILEHIINKDYQWIISNLDHKLTKKQIYKIDQILDLLKQNYPLAYILKSKYFYSNIFFVNKDVLIPRNESELIIDHVSEFVKNNNDLLIVDLCTGSGCLGISCALLNDQNKVILTDISYKSLKVANKNIKKFNLINTSCLNGNFIDVLIKNNLKANLIICNPPYIDINDQNIDKNVIDFEPSIALFAPNKGLYFYEILIKNIDKIVDTNKNFLIVLEFGWLQKDSIEQLLINNCLKYKWEFKKDYNDYWRNLIIKNF</sequence>
<evidence type="ECO:0000255" key="1">
    <source>
        <dbReference type="HAMAP-Rule" id="MF_02126"/>
    </source>
</evidence>
<comment type="function">
    <text evidence="1">Methylates the class 1 translation termination release factors RF1/PrfA and RF2/PrfB on the glutamine residue of the universally conserved GGQ motif.</text>
</comment>
<comment type="catalytic activity">
    <reaction evidence="1">
        <text>L-glutaminyl-[peptide chain release factor] + S-adenosyl-L-methionine = N(5)-methyl-L-glutaminyl-[peptide chain release factor] + S-adenosyl-L-homocysteine + H(+)</text>
        <dbReference type="Rhea" id="RHEA:42896"/>
        <dbReference type="Rhea" id="RHEA-COMP:10271"/>
        <dbReference type="Rhea" id="RHEA-COMP:10272"/>
        <dbReference type="ChEBI" id="CHEBI:15378"/>
        <dbReference type="ChEBI" id="CHEBI:30011"/>
        <dbReference type="ChEBI" id="CHEBI:57856"/>
        <dbReference type="ChEBI" id="CHEBI:59789"/>
        <dbReference type="ChEBI" id="CHEBI:61891"/>
        <dbReference type="EC" id="2.1.1.297"/>
    </reaction>
</comment>
<comment type="similarity">
    <text evidence="1">Belongs to the protein N5-glutamine methyltransferase family. PrmC subfamily.</text>
</comment>
<gene>
    <name evidence="1" type="primary">prmC</name>
    <name type="synonym">hemK</name>
    <name type="ordered locus">MSC_0151</name>
</gene>
<protein>
    <recommendedName>
        <fullName evidence="1">Release factor glutamine methyltransferase</fullName>
        <shortName evidence="1">RF MTase</shortName>
        <ecNumber evidence="1">2.1.1.297</ecNumber>
    </recommendedName>
    <alternativeName>
        <fullName evidence="1">N5-glutamine methyltransferase PrmC</fullName>
    </alternativeName>
    <alternativeName>
        <fullName evidence="1">Protein-(glutamine-N5) MTase PrmC</fullName>
    </alternativeName>
    <alternativeName>
        <fullName evidence="1">Protein-glutamine N-methyltransferase PrmC</fullName>
    </alternativeName>
</protein>
<proteinExistence type="inferred from homology"/>
<accession>Q6MU88</accession>